<name>URE1_BURP6</name>
<evidence type="ECO:0000255" key="1">
    <source>
        <dbReference type="HAMAP-Rule" id="MF_01953"/>
    </source>
</evidence>
<proteinExistence type="inferred from homology"/>
<gene>
    <name evidence="1" type="primary">ureC</name>
    <name type="ordered locus">BURPS668_3076</name>
</gene>
<reference key="1">
    <citation type="journal article" date="2010" name="Genome Biol. Evol.">
        <title>Continuing evolution of Burkholderia mallei through genome reduction and large-scale rearrangements.</title>
        <authorList>
            <person name="Losada L."/>
            <person name="Ronning C.M."/>
            <person name="DeShazer D."/>
            <person name="Woods D."/>
            <person name="Fedorova N."/>
            <person name="Kim H.S."/>
            <person name="Shabalina S.A."/>
            <person name="Pearson T.R."/>
            <person name="Brinkac L."/>
            <person name="Tan P."/>
            <person name="Nandi T."/>
            <person name="Crabtree J."/>
            <person name="Badger J."/>
            <person name="Beckstrom-Sternberg S."/>
            <person name="Saqib M."/>
            <person name="Schutzer S.E."/>
            <person name="Keim P."/>
            <person name="Nierman W.C."/>
        </authorList>
    </citation>
    <scope>NUCLEOTIDE SEQUENCE [LARGE SCALE GENOMIC DNA]</scope>
    <source>
        <strain>668</strain>
    </source>
</reference>
<protein>
    <recommendedName>
        <fullName evidence="1">Urease subunit alpha</fullName>
        <ecNumber evidence="1">3.5.1.5</ecNumber>
    </recommendedName>
    <alternativeName>
        <fullName evidence="1">Urea amidohydrolase subunit alpha</fullName>
    </alternativeName>
</protein>
<dbReference type="EC" id="3.5.1.5" evidence="1"/>
<dbReference type="EMBL" id="CP000570">
    <property type="protein sequence ID" value="ABN82525.1"/>
    <property type="molecule type" value="Genomic_DNA"/>
</dbReference>
<dbReference type="RefSeq" id="WP_004522266.1">
    <property type="nucleotide sequence ID" value="NC_009074.1"/>
</dbReference>
<dbReference type="SMR" id="A3NCL7"/>
<dbReference type="KEGG" id="bpd:BURPS668_3076"/>
<dbReference type="HOGENOM" id="CLU_000980_0_0_4"/>
<dbReference type="UniPathway" id="UPA00258">
    <property type="reaction ID" value="UER00370"/>
</dbReference>
<dbReference type="GO" id="GO:0005737">
    <property type="term" value="C:cytoplasm"/>
    <property type="evidence" value="ECO:0007669"/>
    <property type="project" value="UniProtKB-SubCell"/>
</dbReference>
<dbReference type="GO" id="GO:0016151">
    <property type="term" value="F:nickel cation binding"/>
    <property type="evidence" value="ECO:0007669"/>
    <property type="project" value="UniProtKB-UniRule"/>
</dbReference>
<dbReference type="GO" id="GO:0009039">
    <property type="term" value="F:urease activity"/>
    <property type="evidence" value="ECO:0007669"/>
    <property type="project" value="UniProtKB-UniRule"/>
</dbReference>
<dbReference type="GO" id="GO:0043419">
    <property type="term" value="P:urea catabolic process"/>
    <property type="evidence" value="ECO:0007669"/>
    <property type="project" value="UniProtKB-UniRule"/>
</dbReference>
<dbReference type="CDD" id="cd00375">
    <property type="entry name" value="Urease_alpha"/>
    <property type="match status" value="1"/>
</dbReference>
<dbReference type="Gene3D" id="3.20.20.140">
    <property type="entry name" value="Metal-dependent hydrolases"/>
    <property type="match status" value="1"/>
</dbReference>
<dbReference type="Gene3D" id="2.30.40.10">
    <property type="entry name" value="Urease, subunit C, domain 1"/>
    <property type="match status" value="1"/>
</dbReference>
<dbReference type="HAMAP" id="MF_01953">
    <property type="entry name" value="Urease_alpha"/>
    <property type="match status" value="1"/>
</dbReference>
<dbReference type="InterPro" id="IPR006680">
    <property type="entry name" value="Amidohydro-rel"/>
</dbReference>
<dbReference type="InterPro" id="IPR011059">
    <property type="entry name" value="Metal-dep_hydrolase_composite"/>
</dbReference>
<dbReference type="InterPro" id="IPR032466">
    <property type="entry name" value="Metal_Hydrolase"/>
</dbReference>
<dbReference type="InterPro" id="IPR011612">
    <property type="entry name" value="Urease_alpha_N_dom"/>
</dbReference>
<dbReference type="InterPro" id="IPR050112">
    <property type="entry name" value="Urease_alpha_subunit"/>
</dbReference>
<dbReference type="InterPro" id="IPR017950">
    <property type="entry name" value="Urease_AS"/>
</dbReference>
<dbReference type="InterPro" id="IPR005848">
    <property type="entry name" value="Urease_asu"/>
</dbReference>
<dbReference type="InterPro" id="IPR017951">
    <property type="entry name" value="Urease_asu_c"/>
</dbReference>
<dbReference type="InterPro" id="IPR029754">
    <property type="entry name" value="Urease_Ni-bd"/>
</dbReference>
<dbReference type="NCBIfam" id="NF009685">
    <property type="entry name" value="PRK13206.1"/>
    <property type="match status" value="1"/>
</dbReference>
<dbReference type="NCBIfam" id="NF009686">
    <property type="entry name" value="PRK13207.1"/>
    <property type="match status" value="1"/>
</dbReference>
<dbReference type="NCBIfam" id="TIGR01792">
    <property type="entry name" value="urease_alph"/>
    <property type="match status" value="1"/>
</dbReference>
<dbReference type="PANTHER" id="PTHR43440">
    <property type="entry name" value="UREASE"/>
    <property type="match status" value="1"/>
</dbReference>
<dbReference type="PANTHER" id="PTHR43440:SF1">
    <property type="entry name" value="UREASE"/>
    <property type="match status" value="1"/>
</dbReference>
<dbReference type="Pfam" id="PF01979">
    <property type="entry name" value="Amidohydro_1"/>
    <property type="match status" value="1"/>
</dbReference>
<dbReference type="Pfam" id="PF00449">
    <property type="entry name" value="Urease_alpha"/>
    <property type="match status" value="1"/>
</dbReference>
<dbReference type="PRINTS" id="PR01752">
    <property type="entry name" value="UREASE"/>
</dbReference>
<dbReference type="SUPFAM" id="SSF51338">
    <property type="entry name" value="Composite domain of metallo-dependent hydrolases"/>
    <property type="match status" value="2"/>
</dbReference>
<dbReference type="SUPFAM" id="SSF51556">
    <property type="entry name" value="Metallo-dependent hydrolases"/>
    <property type="match status" value="1"/>
</dbReference>
<dbReference type="PROSITE" id="PS01120">
    <property type="entry name" value="UREASE_1"/>
    <property type="match status" value="1"/>
</dbReference>
<dbReference type="PROSITE" id="PS00145">
    <property type="entry name" value="UREASE_2"/>
    <property type="match status" value="1"/>
</dbReference>
<dbReference type="PROSITE" id="PS51368">
    <property type="entry name" value="UREASE_3"/>
    <property type="match status" value="1"/>
</dbReference>
<accession>A3NCL7</accession>
<feature type="chain" id="PRO_1000070653" description="Urease subunit alpha">
    <location>
        <begin position="1"/>
        <end position="568"/>
    </location>
</feature>
<feature type="domain" description="Urease" evidence="1">
    <location>
        <begin position="130"/>
        <end position="568"/>
    </location>
</feature>
<feature type="active site" description="Proton donor" evidence="1">
    <location>
        <position position="321"/>
    </location>
</feature>
<feature type="binding site" evidence="1">
    <location>
        <position position="135"/>
    </location>
    <ligand>
        <name>Ni(2+)</name>
        <dbReference type="ChEBI" id="CHEBI:49786"/>
        <label>1</label>
    </ligand>
</feature>
<feature type="binding site" evidence="1">
    <location>
        <position position="137"/>
    </location>
    <ligand>
        <name>Ni(2+)</name>
        <dbReference type="ChEBI" id="CHEBI:49786"/>
        <label>1</label>
    </ligand>
</feature>
<feature type="binding site" description="via carbamate group" evidence="1">
    <location>
        <position position="218"/>
    </location>
    <ligand>
        <name>Ni(2+)</name>
        <dbReference type="ChEBI" id="CHEBI:49786"/>
        <label>1</label>
    </ligand>
</feature>
<feature type="binding site" description="via carbamate group" evidence="1">
    <location>
        <position position="218"/>
    </location>
    <ligand>
        <name>Ni(2+)</name>
        <dbReference type="ChEBI" id="CHEBI:49786"/>
        <label>2</label>
    </ligand>
</feature>
<feature type="binding site" evidence="1">
    <location>
        <position position="220"/>
    </location>
    <ligand>
        <name>substrate</name>
    </ligand>
</feature>
<feature type="binding site" evidence="1">
    <location>
        <position position="247"/>
    </location>
    <ligand>
        <name>Ni(2+)</name>
        <dbReference type="ChEBI" id="CHEBI:49786"/>
        <label>2</label>
    </ligand>
</feature>
<feature type="binding site" evidence="1">
    <location>
        <position position="273"/>
    </location>
    <ligand>
        <name>Ni(2+)</name>
        <dbReference type="ChEBI" id="CHEBI:49786"/>
        <label>2</label>
    </ligand>
</feature>
<feature type="binding site" evidence="1">
    <location>
        <position position="361"/>
    </location>
    <ligand>
        <name>Ni(2+)</name>
        <dbReference type="ChEBI" id="CHEBI:49786"/>
        <label>1</label>
    </ligand>
</feature>
<feature type="modified residue" description="N6-carboxylysine" evidence="1">
    <location>
        <position position="218"/>
    </location>
</feature>
<sequence length="568" mass="60706">MTLRLSRRAYAEMYGPTTGDRIRLADTELLIEVERDHTLYGEEVKFGGGKVIRDGMGQSQLPAADVADTVITNAVILDHWGIVKADIAIKHGRIAAIGKAGNPDIQPGVTIAIGAATEIIAGEGLIVTAGGIDTHIHFISPQQIDEALASGVTTMIGGGTGPATGTNATTCTPGPWHMERMLQAADGWPINLGFLGKGNASRPQPLVEQIEAGAIGLKLHEDWGTTPAAIDNCLTVADDTDTQVAIHTDTLNEAGFVEATVAAFKGRTIHTYHTEGAGGGHAPDILKVCGEANVLPSSTNPTRPYTINTLDEHLDMLMVCHHLDPSIAEDLAFAESRIRRETIAAEDILHDLGALSMLSSDSQAMGRVGEVIIRTWQTAHKMKVQRGALTGDGARNDNFRAKRYVAKYTINPALTHGIAHEVGSIEPGKWADLVLWEPAFFGVKPAMIIKGGMIAVAQMGDPNASIPTPQPVHYREMFATRGGALARTSLTFVSQLALDAGIGARYGLAKRLVPVRGCRTVTKRDMIHNAWQPAIRVDPETYDVVADGALLTCEPAAVLPMAQRYFLF</sequence>
<keyword id="KW-0963">Cytoplasm</keyword>
<keyword id="KW-0378">Hydrolase</keyword>
<keyword id="KW-0479">Metal-binding</keyword>
<keyword id="KW-0533">Nickel</keyword>
<organism>
    <name type="scientific">Burkholderia pseudomallei (strain 668)</name>
    <dbReference type="NCBI Taxonomy" id="320373"/>
    <lineage>
        <taxon>Bacteria</taxon>
        <taxon>Pseudomonadati</taxon>
        <taxon>Pseudomonadota</taxon>
        <taxon>Betaproteobacteria</taxon>
        <taxon>Burkholderiales</taxon>
        <taxon>Burkholderiaceae</taxon>
        <taxon>Burkholderia</taxon>
        <taxon>pseudomallei group</taxon>
    </lineage>
</organism>
<comment type="catalytic activity">
    <reaction evidence="1">
        <text>urea + 2 H2O + H(+) = hydrogencarbonate + 2 NH4(+)</text>
        <dbReference type="Rhea" id="RHEA:20557"/>
        <dbReference type="ChEBI" id="CHEBI:15377"/>
        <dbReference type="ChEBI" id="CHEBI:15378"/>
        <dbReference type="ChEBI" id="CHEBI:16199"/>
        <dbReference type="ChEBI" id="CHEBI:17544"/>
        <dbReference type="ChEBI" id="CHEBI:28938"/>
        <dbReference type="EC" id="3.5.1.5"/>
    </reaction>
</comment>
<comment type="cofactor">
    <cofactor evidence="1">
        <name>Ni cation</name>
        <dbReference type="ChEBI" id="CHEBI:25516"/>
    </cofactor>
    <text evidence="1">Binds 2 nickel ions per subunit.</text>
</comment>
<comment type="pathway">
    <text evidence="1">Nitrogen metabolism; urea degradation; CO(2) and NH(3) from urea (urease route): step 1/1.</text>
</comment>
<comment type="subunit">
    <text evidence="1">Heterotrimer of UreA (gamma), UreB (beta) and UreC (alpha) subunits. Three heterotrimers associate to form the active enzyme.</text>
</comment>
<comment type="subcellular location">
    <subcellularLocation>
        <location evidence="1">Cytoplasm</location>
    </subcellularLocation>
</comment>
<comment type="PTM">
    <text evidence="1">Carboxylation allows a single lysine to coordinate two nickel ions.</text>
</comment>
<comment type="similarity">
    <text evidence="1">Belongs to the metallo-dependent hydrolases superfamily. Urease alpha subunit family.</text>
</comment>